<comment type="function">
    <text evidence="1">Catalyzes the conversion of O-acetyl-L-homoserine (OAH) into homocysteine in the methionine biosynthesis pathway. Also catalyzes the conversion of O-acetylserine (OAS) into cysteine, the last step in the cysteine biosynthesis pathway.</text>
</comment>
<comment type="catalytic activity">
    <reaction evidence="1">
        <text>O-acetyl-L-homoserine + methanethiol = L-methionine + acetate + H(+)</text>
        <dbReference type="Rhea" id="RHEA:10048"/>
        <dbReference type="ChEBI" id="CHEBI:15378"/>
        <dbReference type="ChEBI" id="CHEBI:16007"/>
        <dbReference type="ChEBI" id="CHEBI:30089"/>
        <dbReference type="ChEBI" id="CHEBI:57716"/>
        <dbReference type="ChEBI" id="CHEBI:57844"/>
        <dbReference type="EC" id="2.5.1.49"/>
    </reaction>
</comment>
<comment type="catalytic activity">
    <reaction evidence="1">
        <text>O-acetyl-L-homoserine + hydrogen sulfide = L-homocysteine + acetate</text>
        <dbReference type="Rhea" id="RHEA:27822"/>
        <dbReference type="ChEBI" id="CHEBI:29919"/>
        <dbReference type="ChEBI" id="CHEBI:30089"/>
        <dbReference type="ChEBI" id="CHEBI:57716"/>
        <dbReference type="ChEBI" id="CHEBI:58199"/>
        <dbReference type="EC" id="2.5.1.49"/>
    </reaction>
</comment>
<comment type="catalytic activity">
    <reaction evidence="1">
        <text>O-acetyl-L-serine + hydrogen sulfide = L-cysteine + acetate</text>
        <dbReference type="Rhea" id="RHEA:14829"/>
        <dbReference type="ChEBI" id="CHEBI:29919"/>
        <dbReference type="ChEBI" id="CHEBI:30089"/>
        <dbReference type="ChEBI" id="CHEBI:35235"/>
        <dbReference type="ChEBI" id="CHEBI:58340"/>
        <dbReference type="EC" id="2.5.1.47"/>
    </reaction>
</comment>
<comment type="cofactor">
    <cofactor evidence="1">
        <name>pyridoxal 5'-phosphate</name>
        <dbReference type="ChEBI" id="CHEBI:597326"/>
    </cofactor>
</comment>
<comment type="pathway">
    <text evidence="1">Amino-acid biosynthesis; L-methionine biosynthesis via de novo pathway; L-homocysteine from O-acetyl-L-homoserine.</text>
</comment>
<comment type="pathway">
    <text evidence="3">Amino-acid biosynthesis; L-cysteine biosynthesis; L-cysteine from L-serine: step 2/2.</text>
</comment>
<comment type="subunit">
    <text evidence="1">Homotetramer.</text>
</comment>
<comment type="subcellular location">
    <subcellularLocation>
        <location evidence="1">Cytoplasm</location>
    </subcellularLocation>
</comment>
<comment type="similarity">
    <text evidence="3">Belongs to the trans-sulfuration enzymes family.</text>
</comment>
<feature type="initiator methionine" description="Removed" evidence="1">
    <location>
        <position position="1"/>
    </location>
</feature>
<feature type="chain" id="PRO_0000114775" description="Homocysteine/cysteine synthase">
    <location>
        <begin position="2"/>
        <end position="444"/>
    </location>
</feature>
<feature type="modified residue" description="N6-(pyridoxal phosphate)lysine" evidence="2">
    <location>
        <position position="208"/>
    </location>
</feature>
<organism>
    <name type="scientific">Kluyveromyces lactis (strain ATCC 8585 / CBS 2359 / DSM 70799 / NBRC 1267 / NRRL Y-1140 / WM37)</name>
    <name type="common">Yeast</name>
    <name type="synonym">Candida sphaerica</name>
    <dbReference type="NCBI Taxonomy" id="284590"/>
    <lineage>
        <taxon>Eukaryota</taxon>
        <taxon>Fungi</taxon>
        <taxon>Dikarya</taxon>
        <taxon>Ascomycota</taxon>
        <taxon>Saccharomycotina</taxon>
        <taxon>Saccharomycetes</taxon>
        <taxon>Saccharomycetales</taxon>
        <taxon>Saccharomycetaceae</taxon>
        <taxon>Kluyveromyces</taxon>
    </lineage>
</organism>
<proteinExistence type="inferred from homology"/>
<gene>
    <name type="primary">MET17</name>
    <name type="ordered locus">KLLA0D04037g</name>
</gene>
<reference key="1">
    <citation type="journal article" date="1999" name="Yeast">
        <title>Cloning and characterization of the Kluyveromyces lactis homocysteine synthase gene.</title>
        <authorList>
            <person name="Brzywczy J."/>
            <person name="Paszewski A."/>
        </authorList>
    </citation>
    <scope>NUCLEOTIDE SEQUENCE [GENOMIC DNA]</scope>
    <source>
        <strain>WM27 / NRRL Y-17066</strain>
    </source>
</reference>
<reference key="2">
    <citation type="journal article" date="2004" name="Nature">
        <title>Genome evolution in yeasts.</title>
        <authorList>
            <person name="Dujon B."/>
            <person name="Sherman D."/>
            <person name="Fischer G."/>
            <person name="Durrens P."/>
            <person name="Casaregola S."/>
            <person name="Lafontaine I."/>
            <person name="de Montigny J."/>
            <person name="Marck C."/>
            <person name="Neuveglise C."/>
            <person name="Talla E."/>
            <person name="Goffard N."/>
            <person name="Frangeul L."/>
            <person name="Aigle M."/>
            <person name="Anthouard V."/>
            <person name="Babour A."/>
            <person name="Barbe V."/>
            <person name="Barnay S."/>
            <person name="Blanchin S."/>
            <person name="Beckerich J.-M."/>
            <person name="Beyne E."/>
            <person name="Bleykasten C."/>
            <person name="Boisrame A."/>
            <person name="Boyer J."/>
            <person name="Cattolico L."/>
            <person name="Confanioleri F."/>
            <person name="de Daruvar A."/>
            <person name="Despons L."/>
            <person name="Fabre E."/>
            <person name="Fairhead C."/>
            <person name="Ferry-Dumazet H."/>
            <person name="Groppi A."/>
            <person name="Hantraye F."/>
            <person name="Hennequin C."/>
            <person name="Jauniaux N."/>
            <person name="Joyet P."/>
            <person name="Kachouri R."/>
            <person name="Kerrest A."/>
            <person name="Koszul R."/>
            <person name="Lemaire M."/>
            <person name="Lesur I."/>
            <person name="Ma L."/>
            <person name="Muller H."/>
            <person name="Nicaud J.-M."/>
            <person name="Nikolski M."/>
            <person name="Oztas S."/>
            <person name="Ozier-Kalogeropoulos O."/>
            <person name="Pellenz S."/>
            <person name="Potier S."/>
            <person name="Richard G.-F."/>
            <person name="Straub M.-L."/>
            <person name="Suleau A."/>
            <person name="Swennen D."/>
            <person name="Tekaia F."/>
            <person name="Wesolowski-Louvel M."/>
            <person name="Westhof E."/>
            <person name="Wirth B."/>
            <person name="Zeniou-Meyer M."/>
            <person name="Zivanovic Y."/>
            <person name="Bolotin-Fukuhara M."/>
            <person name="Thierry A."/>
            <person name="Bouchier C."/>
            <person name="Caudron B."/>
            <person name="Scarpelli C."/>
            <person name="Gaillardin C."/>
            <person name="Weissenbach J."/>
            <person name="Wincker P."/>
            <person name="Souciet J.-L."/>
        </authorList>
    </citation>
    <scope>NUCLEOTIDE SEQUENCE [LARGE SCALE GENOMIC DNA]</scope>
    <source>
        <strain>ATCC 8585 / CBS 2359 / DSM 70799 / NBRC 1267 / NRRL Y-1140 / WM37</strain>
    </source>
</reference>
<sequence>MPSHFDTLQLHAGQEKTADAHNPRAVPIYATTSYVFNDSKHGAQLFGLETPGYIYSRIMNPTLDVLEKRLAALEGGIAALATSSGQAAQTLAVTGLAHTGDNIVSTSFLYGGTYNQFKVAFKRLGIEARFVDGDKPEDFEKLFDEKTKALYLESIGNPKYNVPDFEKIVAVAHKHGIPVVVDNTFGAGGFFCQPIKYGADIVTHSATKWIGGHGVTVGGVIIDSGKFPWKDYPEKFPQFSQPSEGYHGLIFNDAFGPAAFIGHVRTELLRDLGPVLSPFAGFLLLQGLETLSLRGERHGSNALKLAQYLESSPYVSWVSYPGLPSHSHHENAKKYLENGFGGVLSFGVKDLPNASEESDPFKASGAQVVDNLKLASNLANVGDSKTLVIAPYFTTHQQLTDEEKLASGVTKDLIRVSVGTEFIDDIIADFEASFATVFNGQKPE</sequence>
<evidence type="ECO:0000250" key="1">
    <source>
        <dbReference type="UniProtKB" id="P06106"/>
    </source>
</evidence>
<evidence type="ECO:0000250" key="2">
    <source>
        <dbReference type="UniProtKB" id="P06721"/>
    </source>
</evidence>
<evidence type="ECO:0000305" key="3"/>
<name>CYSD_KLULA</name>
<keyword id="KW-0028">Amino-acid biosynthesis</keyword>
<keyword id="KW-0198">Cysteine biosynthesis</keyword>
<keyword id="KW-0963">Cytoplasm</keyword>
<keyword id="KW-0486">Methionine biosynthesis</keyword>
<keyword id="KW-0663">Pyridoxal phosphate</keyword>
<keyword id="KW-1185">Reference proteome</keyword>
<keyword id="KW-0808">Transferase</keyword>
<accession>Q92441</accession>
<dbReference type="EC" id="2.5.1.47"/>
<dbReference type="EC" id="2.5.1.49"/>
<dbReference type="EMBL" id="U72486">
    <property type="protein sequence ID" value="AAB17387.1"/>
    <property type="molecule type" value="Genomic_DNA"/>
</dbReference>
<dbReference type="EMBL" id="CR382124">
    <property type="protein sequence ID" value="CAH00339.1"/>
    <property type="molecule type" value="Genomic_DNA"/>
</dbReference>
<dbReference type="RefSeq" id="XP_453243.1">
    <property type="nucleotide sequence ID" value="XM_453243.1"/>
</dbReference>
<dbReference type="SMR" id="Q92441"/>
<dbReference type="FunCoup" id="Q92441">
    <property type="interactions" value="222"/>
</dbReference>
<dbReference type="STRING" id="284590.Q92441"/>
<dbReference type="PaxDb" id="284590-Q92441"/>
<dbReference type="KEGG" id="kla:KLLA0_D04037g"/>
<dbReference type="eggNOG" id="KOG0053">
    <property type="taxonomic scope" value="Eukaryota"/>
</dbReference>
<dbReference type="HOGENOM" id="CLU_018986_4_0_1"/>
<dbReference type="InParanoid" id="Q92441"/>
<dbReference type="OMA" id="NAFQIIQ"/>
<dbReference type="UniPathway" id="UPA00136">
    <property type="reaction ID" value="UER00200"/>
</dbReference>
<dbReference type="Proteomes" id="UP000000598">
    <property type="component" value="Chromosome D"/>
</dbReference>
<dbReference type="GO" id="GO:0005737">
    <property type="term" value="C:cytoplasm"/>
    <property type="evidence" value="ECO:0007669"/>
    <property type="project" value="UniProtKB-SubCell"/>
</dbReference>
<dbReference type="GO" id="GO:0004124">
    <property type="term" value="F:cysteine synthase activity"/>
    <property type="evidence" value="ECO:0007669"/>
    <property type="project" value="UniProtKB-EC"/>
</dbReference>
<dbReference type="GO" id="GO:0051009">
    <property type="term" value="F:O-acetylhomoserine sulfhydrylase activity"/>
    <property type="evidence" value="ECO:0007669"/>
    <property type="project" value="RHEA"/>
</dbReference>
<dbReference type="GO" id="GO:0030170">
    <property type="term" value="F:pyridoxal phosphate binding"/>
    <property type="evidence" value="ECO:0007669"/>
    <property type="project" value="InterPro"/>
</dbReference>
<dbReference type="GO" id="GO:0006535">
    <property type="term" value="P:cysteine biosynthetic process from serine"/>
    <property type="evidence" value="ECO:0007669"/>
    <property type="project" value="TreeGrafter"/>
</dbReference>
<dbReference type="GO" id="GO:0071269">
    <property type="term" value="P:L-homocysteine biosynthetic process"/>
    <property type="evidence" value="ECO:0007669"/>
    <property type="project" value="TreeGrafter"/>
</dbReference>
<dbReference type="GO" id="GO:0019346">
    <property type="term" value="P:transsulfuration"/>
    <property type="evidence" value="ECO:0007669"/>
    <property type="project" value="InterPro"/>
</dbReference>
<dbReference type="CDD" id="cd00614">
    <property type="entry name" value="CGS_like"/>
    <property type="match status" value="1"/>
</dbReference>
<dbReference type="FunFam" id="3.90.1150.10:FF:000083">
    <property type="entry name" value="O-acetylhomoserine sulfhydrylase"/>
    <property type="match status" value="1"/>
</dbReference>
<dbReference type="FunFam" id="3.40.640.10:FF:000035">
    <property type="entry name" value="O-succinylhomoserine sulfhydrylase"/>
    <property type="match status" value="1"/>
</dbReference>
<dbReference type="Gene3D" id="3.90.1150.10">
    <property type="entry name" value="Aspartate Aminotransferase, domain 1"/>
    <property type="match status" value="1"/>
</dbReference>
<dbReference type="Gene3D" id="3.40.640.10">
    <property type="entry name" value="Type I PLP-dependent aspartate aminotransferase-like (Major domain)"/>
    <property type="match status" value="1"/>
</dbReference>
<dbReference type="InterPro" id="IPR000277">
    <property type="entry name" value="Cys/Met-Metab_PyrdxlP-dep_enz"/>
</dbReference>
<dbReference type="InterPro" id="IPR054542">
    <property type="entry name" value="Cys_met_metab_PP"/>
</dbReference>
<dbReference type="InterPro" id="IPR006235">
    <property type="entry name" value="OAc-hSer/O-AcSer_sulfhydrylase"/>
</dbReference>
<dbReference type="InterPro" id="IPR015424">
    <property type="entry name" value="PyrdxlP-dep_Trfase"/>
</dbReference>
<dbReference type="InterPro" id="IPR015421">
    <property type="entry name" value="PyrdxlP-dep_Trfase_major"/>
</dbReference>
<dbReference type="InterPro" id="IPR015422">
    <property type="entry name" value="PyrdxlP-dep_Trfase_small"/>
</dbReference>
<dbReference type="NCBIfam" id="TIGR01326">
    <property type="entry name" value="OAH_OAS_sulfhy"/>
    <property type="match status" value="1"/>
</dbReference>
<dbReference type="PANTHER" id="PTHR43797">
    <property type="entry name" value="HOMOCYSTEINE/CYSTEINE SYNTHASE"/>
    <property type="match status" value="1"/>
</dbReference>
<dbReference type="PANTHER" id="PTHR43797:SF2">
    <property type="entry name" value="HOMOCYSTEINE_CYSTEINE SYNTHASE"/>
    <property type="match status" value="1"/>
</dbReference>
<dbReference type="Pfam" id="PF01053">
    <property type="entry name" value="Cys_Met_Meta_PP"/>
    <property type="match status" value="1"/>
</dbReference>
<dbReference type="PIRSF" id="PIRSF001434">
    <property type="entry name" value="CGS"/>
    <property type="match status" value="1"/>
</dbReference>
<dbReference type="SUPFAM" id="SSF53383">
    <property type="entry name" value="PLP-dependent transferases"/>
    <property type="match status" value="1"/>
</dbReference>
<dbReference type="PROSITE" id="PS00868">
    <property type="entry name" value="CYS_MET_METAB_PP"/>
    <property type="match status" value="1"/>
</dbReference>
<protein>
    <recommendedName>
        <fullName>Homocysteine/cysteine synthase</fullName>
        <ecNumber>2.5.1.47</ecNumber>
        <ecNumber>2.5.1.49</ecNumber>
    </recommendedName>
    <alternativeName>
        <fullName>O-acetylserine/O-acetylhomoserine sulfhydrylase</fullName>
        <shortName>OAS-OAH SHLase</shortName>
        <shortName>OAS-OAH sulfhydrylase</shortName>
    </alternativeName>
</protein>